<feature type="chain" id="PRO_0000265863" description="ATP synthase epsilon chain">
    <location>
        <begin position="1"/>
        <end position="141"/>
    </location>
</feature>
<accession>Q3K442</accession>
<reference key="1">
    <citation type="journal article" date="2009" name="Genome Biol.">
        <title>Genomic and genetic analyses of diversity and plant interactions of Pseudomonas fluorescens.</title>
        <authorList>
            <person name="Silby M.W."/>
            <person name="Cerdeno-Tarraga A.M."/>
            <person name="Vernikos G.S."/>
            <person name="Giddens S.R."/>
            <person name="Jackson R.W."/>
            <person name="Preston G.M."/>
            <person name="Zhang X.-X."/>
            <person name="Moon C.D."/>
            <person name="Gehrig S.M."/>
            <person name="Godfrey S.A.C."/>
            <person name="Knight C.G."/>
            <person name="Malone J.G."/>
            <person name="Robinson Z."/>
            <person name="Spiers A.J."/>
            <person name="Harris S."/>
            <person name="Challis G.L."/>
            <person name="Yaxley A.M."/>
            <person name="Harris D."/>
            <person name="Seeger K."/>
            <person name="Murphy L."/>
            <person name="Rutter S."/>
            <person name="Squares R."/>
            <person name="Quail M.A."/>
            <person name="Saunders E."/>
            <person name="Mavromatis K."/>
            <person name="Brettin T.S."/>
            <person name="Bentley S.D."/>
            <person name="Hothersall J."/>
            <person name="Stephens E."/>
            <person name="Thomas C.M."/>
            <person name="Parkhill J."/>
            <person name="Levy S.B."/>
            <person name="Rainey P.B."/>
            <person name="Thomson N.R."/>
        </authorList>
    </citation>
    <scope>NUCLEOTIDE SEQUENCE [LARGE SCALE GENOMIC DNA]</scope>
    <source>
        <strain>Pf0-1</strain>
    </source>
</reference>
<dbReference type="EMBL" id="CP000094">
    <property type="protein sequence ID" value="ABA77462.1"/>
    <property type="molecule type" value="Genomic_DNA"/>
</dbReference>
<dbReference type="RefSeq" id="WP_007954164.1">
    <property type="nucleotide sequence ID" value="NC_007492.2"/>
</dbReference>
<dbReference type="SMR" id="Q3K442"/>
<dbReference type="KEGG" id="pfo:Pfl01_5729"/>
<dbReference type="eggNOG" id="COG0355">
    <property type="taxonomic scope" value="Bacteria"/>
</dbReference>
<dbReference type="HOGENOM" id="CLU_084338_2_0_6"/>
<dbReference type="Proteomes" id="UP000002704">
    <property type="component" value="Chromosome"/>
</dbReference>
<dbReference type="GO" id="GO:0005886">
    <property type="term" value="C:plasma membrane"/>
    <property type="evidence" value="ECO:0007669"/>
    <property type="project" value="UniProtKB-SubCell"/>
</dbReference>
<dbReference type="GO" id="GO:0045259">
    <property type="term" value="C:proton-transporting ATP synthase complex"/>
    <property type="evidence" value="ECO:0007669"/>
    <property type="project" value="UniProtKB-KW"/>
</dbReference>
<dbReference type="GO" id="GO:0005524">
    <property type="term" value="F:ATP binding"/>
    <property type="evidence" value="ECO:0007669"/>
    <property type="project" value="UniProtKB-UniRule"/>
</dbReference>
<dbReference type="GO" id="GO:0046933">
    <property type="term" value="F:proton-transporting ATP synthase activity, rotational mechanism"/>
    <property type="evidence" value="ECO:0007669"/>
    <property type="project" value="UniProtKB-UniRule"/>
</dbReference>
<dbReference type="CDD" id="cd12152">
    <property type="entry name" value="F1-ATPase_delta"/>
    <property type="match status" value="1"/>
</dbReference>
<dbReference type="FunFam" id="2.60.15.10:FF:000001">
    <property type="entry name" value="ATP synthase epsilon chain"/>
    <property type="match status" value="1"/>
</dbReference>
<dbReference type="Gene3D" id="1.20.5.440">
    <property type="entry name" value="ATP synthase delta/epsilon subunit, C-terminal domain"/>
    <property type="match status" value="1"/>
</dbReference>
<dbReference type="Gene3D" id="2.60.15.10">
    <property type="entry name" value="F0F1 ATP synthase delta/epsilon subunit, N-terminal"/>
    <property type="match status" value="1"/>
</dbReference>
<dbReference type="HAMAP" id="MF_00530">
    <property type="entry name" value="ATP_synth_epsil_bac"/>
    <property type="match status" value="1"/>
</dbReference>
<dbReference type="InterPro" id="IPR036794">
    <property type="entry name" value="ATP_F1_dsu/esu_C_sf"/>
</dbReference>
<dbReference type="InterPro" id="IPR001469">
    <property type="entry name" value="ATP_synth_F1_dsu/esu"/>
</dbReference>
<dbReference type="InterPro" id="IPR020546">
    <property type="entry name" value="ATP_synth_F1_dsu/esu_N"/>
</dbReference>
<dbReference type="InterPro" id="IPR020547">
    <property type="entry name" value="ATP_synth_F1_esu_C"/>
</dbReference>
<dbReference type="InterPro" id="IPR036771">
    <property type="entry name" value="ATPsynth_dsu/esu_N"/>
</dbReference>
<dbReference type="NCBIfam" id="TIGR01216">
    <property type="entry name" value="ATP_synt_epsi"/>
    <property type="match status" value="1"/>
</dbReference>
<dbReference type="NCBIfam" id="NF001847">
    <property type="entry name" value="PRK00571.1-4"/>
    <property type="match status" value="1"/>
</dbReference>
<dbReference type="PANTHER" id="PTHR13822">
    <property type="entry name" value="ATP SYNTHASE DELTA/EPSILON CHAIN"/>
    <property type="match status" value="1"/>
</dbReference>
<dbReference type="PANTHER" id="PTHR13822:SF10">
    <property type="entry name" value="ATP SYNTHASE EPSILON CHAIN, CHLOROPLASTIC"/>
    <property type="match status" value="1"/>
</dbReference>
<dbReference type="Pfam" id="PF00401">
    <property type="entry name" value="ATP-synt_DE"/>
    <property type="match status" value="1"/>
</dbReference>
<dbReference type="Pfam" id="PF02823">
    <property type="entry name" value="ATP-synt_DE_N"/>
    <property type="match status" value="1"/>
</dbReference>
<dbReference type="SUPFAM" id="SSF46604">
    <property type="entry name" value="Epsilon subunit of F1F0-ATP synthase C-terminal domain"/>
    <property type="match status" value="1"/>
</dbReference>
<dbReference type="SUPFAM" id="SSF51344">
    <property type="entry name" value="Epsilon subunit of F1F0-ATP synthase N-terminal domain"/>
    <property type="match status" value="1"/>
</dbReference>
<name>ATPE_PSEPF</name>
<proteinExistence type="inferred from homology"/>
<gene>
    <name evidence="1" type="primary">atpC</name>
    <name type="ordered locus">Pfl01_5729</name>
</gene>
<evidence type="ECO:0000255" key="1">
    <source>
        <dbReference type="HAMAP-Rule" id="MF_00530"/>
    </source>
</evidence>
<sequence length="141" mass="14754">MAMTVHCDIVSAEGEIFSGLVEMVIAHGALGDLGIALGHAPLITNLKPGPIRLIKQGGEAEVFYISGGFLEVQPNMVKVLADTVQRAADLDEAQAQAALKAAEAALHEKSADFDYGAASARLAEAAAQLRTVQQIRKKFGG</sequence>
<organism>
    <name type="scientific">Pseudomonas fluorescens (strain Pf0-1)</name>
    <dbReference type="NCBI Taxonomy" id="205922"/>
    <lineage>
        <taxon>Bacteria</taxon>
        <taxon>Pseudomonadati</taxon>
        <taxon>Pseudomonadota</taxon>
        <taxon>Gammaproteobacteria</taxon>
        <taxon>Pseudomonadales</taxon>
        <taxon>Pseudomonadaceae</taxon>
        <taxon>Pseudomonas</taxon>
    </lineage>
</organism>
<comment type="function">
    <text evidence="1">Produces ATP from ADP in the presence of a proton gradient across the membrane.</text>
</comment>
<comment type="subunit">
    <text>F-type ATPases have 2 components, CF(1) - the catalytic core - and CF(0) - the membrane proton channel. CF(1) has five subunits: alpha(3), beta(3), gamma(1), delta(1), epsilon(1). CF(0) has three main subunits: a, b and c.</text>
</comment>
<comment type="subcellular location">
    <subcellularLocation>
        <location evidence="1">Cell inner membrane</location>
        <topology evidence="1">Peripheral membrane protein</topology>
    </subcellularLocation>
</comment>
<comment type="similarity">
    <text evidence="1">Belongs to the ATPase epsilon chain family.</text>
</comment>
<keyword id="KW-0066">ATP synthesis</keyword>
<keyword id="KW-0997">Cell inner membrane</keyword>
<keyword id="KW-1003">Cell membrane</keyword>
<keyword id="KW-0139">CF(1)</keyword>
<keyword id="KW-0375">Hydrogen ion transport</keyword>
<keyword id="KW-0406">Ion transport</keyword>
<keyword id="KW-0472">Membrane</keyword>
<keyword id="KW-0813">Transport</keyword>
<protein>
    <recommendedName>
        <fullName evidence="1">ATP synthase epsilon chain</fullName>
    </recommendedName>
    <alternativeName>
        <fullName evidence="1">ATP synthase F1 sector epsilon subunit</fullName>
    </alternativeName>
    <alternativeName>
        <fullName evidence="1">F-ATPase epsilon subunit</fullName>
    </alternativeName>
</protein>